<protein>
    <recommendedName>
        <fullName>Forkhead box protein B2</fullName>
        <shortName>FoxB2</shortName>
        <shortName>xFoxB2</shortName>
    </recommendedName>
    <alternativeName>
        <fullName>Fork head domain-related protein 5</fullName>
        <shortName>FD-5</shortName>
        <shortName>xFD-5</shortName>
    </alternativeName>
</protein>
<name>FOXB2_XENLA</name>
<accession>Q8JIT6</accession>
<evidence type="ECO:0000255" key="1"/>
<evidence type="ECO:0000255" key="2">
    <source>
        <dbReference type="PROSITE-ProRule" id="PRU00089"/>
    </source>
</evidence>
<evidence type="ECO:0000269" key="3">
    <source>
    </source>
</evidence>
<evidence type="ECO:0000305" key="4"/>
<evidence type="ECO:0000312" key="5">
    <source>
        <dbReference type="EMBL" id="CAD31848.1"/>
    </source>
</evidence>
<dbReference type="EMBL" id="AJ487619">
    <property type="protein sequence ID" value="CAD31848.1"/>
    <property type="molecule type" value="Genomic_DNA"/>
</dbReference>
<dbReference type="PIR" id="F56556">
    <property type="entry name" value="F56556"/>
</dbReference>
<dbReference type="SMR" id="Q8JIT6"/>
<dbReference type="KEGG" id="xla:100337555"/>
<dbReference type="AGR" id="Xenbase:XB-GENE-1021720"/>
<dbReference type="CTD" id="100337555"/>
<dbReference type="Xenbase" id="XB-GENE-1021720">
    <property type="gene designation" value="foxb2.S"/>
</dbReference>
<dbReference type="OrthoDB" id="5954824at2759"/>
<dbReference type="Proteomes" id="UP000186698">
    <property type="component" value="Chromosome 1S"/>
</dbReference>
<dbReference type="Bgee" id="100337555">
    <property type="expression patterns" value="Expressed in gastrula and 1 other cell type or tissue"/>
</dbReference>
<dbReference type="GO" id="GO:0005634">
    <property type="term" value="C:nucleus"/>
    <property type="evidence" value="ECO:0000303"/>
    <property type="project" value="UniProtKB"/>
</dbReference>
<dbReference type="GO" id="GO:0003677">
    <property type="term" value="F:DNA binding"/>
    <property type="evidence" value="ECO:0000303"/>
    <property type="project" value="UniProtKB"/>
</dbReference>
<dbReference type="GO" id="GO:0003700">
    <property type="term" value="F:DNA-binding transcription factor activity"/>
    <property type="evidence" value="ECO:0000303"/>
    <property type="project" value="UniProtKB"/>
</dbReference>
<dbReference type="GO" id="GO:0000981">
    <property type="term" value="F:DNA-binding transcription factor activity, RNA polymerase II-specific"/>
    <property type="evidence" value="ECO:0000318"/>
    <property type="project" value="GO_Central"/>
</dbReference>
<dbReference type="GO" id="GO:0000978">
    <property type="term" value="F:RNA polymerase II cis-regulatory region sequence-specific DNA binding"/>
    <property type="evidence" value="ECO:0000318"/>
    <property type="project" value="GO_Central"/>
</dbReference>
<dbReference type="GO" id="GO:0009653">
    <property type="term" value="P:anatomical structure morphogenesis"/>
    <property type="evidence" value="ECO:0000318"/>
    <property type="project" value="GO_Central"/>
</dbReference>
<dbReference type="GO" id="GO:0030154">
    <property type="term" value="P:cell differentiation"/>
    <property type="evidence" value="ECO:0000318"/>
    <property type="project" value="GO_Central"/>
</dbReference>
<dbReference type="GO" id="GO:0006355">
    <property type="term" value="P:regulation of DNA-templated transcription"/>
    <property type="evidence" value="ECO:0000303"/>
    <property type="project" value="UniProtKB"/>
</dbReference>
<dbReference type="GO" id="GO:0006357">
    <property type="term" value="P:regulation of transcription by RNA polymerase II"/>
    <property type="evidence" value="ECO:0000318"/>
    <property type="project" value="GO_Central"/>
</dbReference>
<dbReference type="CDD" id="cd20043">
    <property type="entry name" value="FH_FOXB2"/>
    <property type="match status" value="1"/>
</dbReference>
<dbReference type="FunFam" id="1.10.10.10:FF:000082">
    <property type="entry name" value="forkhead box protein B2"/>
    <property type="match status" value="1"/>
</dbReference>
<dbReference type="Gene3D" id="1.10.10.10">
    <property type="entry name" value="Winged helix-like DNA-binding domain superfamily/Winged helix DNA-binding domain"/>
    <property type="match status" value="1"/>
</dbReference>
<dbReference type="InterPro" id="IPR001766">
    <property type="entry name" value="Fork_head_dom"/>
</dbReference>
<dbReference type="InterPro" id="IPR050211">
    <property type="entry name" value="FOX_domain-containing"/>
</dbReference>
<dbReference type="InterPro" id="IPR047389">
    <property type="entry name" value="FOXB1_B2_FH"/>
</dbReference>
<dbReference type="InterPro" id="IPR018122">
    <property type="entry name" value="TF_fork_head_CS_1"/>
</dbReference>
<dbReference type="InterPro" id="IPR030456">
    <property type="entry name" value="TF_fork_head_CS_2"/>
</dbReference>
<dbReference type="InterPro" id="IPR036388">
    <property type="entry name" value="WH-like_DNA-bd_sf"/>
</dbReference>
<dbReference type="InterPro" id="IPR036390">
    <property type="entry name" value="WH_DNA-bd_sf"/>
</dbReference>
<dbReference type="PANTHER" id="PTHR11829">
    <property type="entry name" value="FORKHEAD BOX PROTEIN"/>
    <property type="match status" value="1"/>
</dbReference>
<dbReference type="PANTHER" id="PTHR11829:SF215">
    <property type="entry name" value="FORKHEAD BOX PROTEIN B2"/>
    <property type="match status" value="1"/>
</dbReference>
<dbReference type="Pfam" id="PF00250">
    <property type="entry name" value="Forkhead"/>
    <property type="match status" value="1"/>
</dbReference>
<dbReference type="PRINTS" id="PR00053">
    <property type="entry name" value="FORKHEAD"/>
</dbReference>
<dbReference type="SMART" id="SM00339">
    <property type="entry name" value="FH"/>
    <property type="match status" value="1"/>
</dbReference>
<dbReference type="SUPFAM" id="SSF46785">
    <property type="entry name" value="Winged helix' DNA-binding domain"/>
    <property type="match status" value="1"/>
</dbReference>
<dbReference type="PROSITE" id="PS00657">
    <property type="entry name" value="FORK_HEAD_1"/>
    <property type="match status" value="1"/>
</dbReference>
<dbReference type="PROSITE" id="PS00658">
    <property type="entry name" value="FORK_HEAD_2"/>
    <property type="match status" value="1"/>
</dbReference>
<dbReference type="PROSITE" id="PS50039">
    <property type="entry name" value="FORK_HEAD_3"/>
    <property type="match status" value="1"/>
</dbReference>
<organism>
    <name type="scientific">Xenopus laevis</name>
    <name type="common">African clawed frog</name>
    <dbReference type="NCBI Taxonomy" id="8355"/>
    <lineage>
        <taxon>Eukaryota</taxon>
        <taxon>Metazoa</taxon>
        <taxon>Chordata</taxon>
        <taxon>Craniata</taxon>
        <taxon>Vertebrata</taxon>
        <taxon>Euteleostomi</taxon>
        <taxon>Amphibia</taxon>
        <taxon>Batrachia</taxon>
        <taxon>Anura</taxon>
        <taxon>Pipoidea</taxon>
        <taxon>Pipidae</taxon>
        <taxon>Xenopodinae</taxon>
        <taxon>Xenopus</taxon>
        <taxon>Xenopus</taxon>
    </lineage>
</organism>
<comment type="function">
    <text evidence="4">Transcription factor.</text>
</comment>
<comment type="subcellular location">
    <subcellularLocation>
        <location evidence="1 4">Nucleus</location>
    </subcellularLocation>
</comment>
<comment type="tissue specificity">
    <text evidence="3">First expressed within the dorsolateral ectoderm, except for the organizer territory. During gastrulation, expressed in 2 ectodermal stripes adjacent to the dorsal midline. With the onset of neurulation, expression shifts first to the neural plate before settling on the bottom of the neural tube, on top of the notochord. Expression is then absent until stage 35, at which stage a pair of cells in the fourth rhombomere in the dorsolateral outer area of the rhombencephalon show expression. This is followed shortly afterwards by expression in a pair of cells in rhombomere 6 at the ventricular side of the rhombencephalon.</text>
</comment>
<comment type="developmental stage">
    <text evidence="3">Expression begins after the mid-blastula transition, peaks during gastrulation and is completely extinguished at the end of neurulation, before reappearing in swimming tadpoles.</text>
</comment>
<gene>
    <name evidence="5" type="primary">foxb2</name>
</gene>
<proteinExistence type="evidence at transcript level"/>
<reference evidence="4 5" key="1">
    <citation type="journal article" date="2002" name="Mech. Dev.">
        <title>Sequence and expression of FoxB2 (XFD-5) and FoxI1c (XFD-10) in Xenopus embryogenesis.</title>
        <authorList>
            <person name="Pohl B.S."/>
            <person name="Knoechel S."/>
            <person name="Dillinger K."/>
            <person name="Knoechel W."/>
        </authorList>
    </citation>
    <scope>NUCLEOTIDE SEQUENCE [GENOMIC DNA]</scope>
    <scope>TISSUE SPECIFICITY</scope>
    <scope>DEVELOPMENTAL STAGE</scope>
</reference>
<reference evidence="4" key="2">
    <citation type="journal article" date="1992" name="Mech. Dev.">
        <title>Activin A induced expression of a fork head related gene in posterior chordamesoderm (notochord) of Xenopus laevis embryos.</title>
        <authorList>
            <person name="Knoechel S."/>
            <person name="Lef J."/>
            <person name="Clement J.H."/>
            <person name="Klocke B."/>
            <person name="Hille S."/>
            <person name="Koester M."/>
            <person name="Knoechel W."/>
        </authorList>
    </citation>
    <scope>NUCLEOTIDE SEQUENCE [GENOMIC DNA] OF 4-114</scope>
</reference>
<reference evidence="4" key="3">
    <citation type="journal article" date="2005" name="Gene">
        <title>Of fox and frogs: fox (fork head/winged helix) transcription factors in Xenopus development.</title>
        <authorList>
            <person name="Pohl B.S."/>
            <person name="Knoechel W."/>
        </authorList>
    </citation>
    <scope>REVIEW</scope>
</reference>
<feature type="chain" id="PRO_0000257999" description="Forkhead box protein B2">
    <location>
        <begin position="1"/>
        <end position="317"/>
    </location>
</feature>
<feature type="DNA-binding region" description="Fork-head" evidence="2">
    <location>
        <begin position="13"/>
        <end position="107"/>
    </location>
</feature>
<keyword id="KW-0238">DNA-binding</keyword>
<keyword id="KW-0539">Nucleus</keyword>
<keyword id="KW-1185">Reference proteome</keyword>
<keyword id="KW-0804">Transcription</keyword>
<keyword id="KW-0805">Transcription regulation</keyword>
<sequence length="317" mass="35294">MPRPGKSSYSEQKPPYSYISLTAMAIQGSQEKMLPLSDIYKFIMDRFPYYRENTQRWQNSLRHNLSFNDCFIKIPRRPDQPGKGSFWALHPNCGDMFENGSFLRRRKRFKVVRAEHLASKSHQMIHYFHHPHNQTKMGLPPSEGSPVPSLGRLPHFQSYNIGNISGNQTSGFKHPFAIENIIGRDYKGVMTGGLPLASMMHHLGYPVPSQISNMVSSMWPHVGMMDSMATMTVPQEYGHFGVPMKTLCHGPSQTIPAVPLPIKPTASLPPVSAIPSLAVNPSIMCPSPPAVAGTLLEPAISQPENKSSMLHSVLVHS</sequence>